<gene>
    <name type="primary">PRO3</name>
</gene>
<name>PROF3_PHLPR</name>
<proteinExistence type="evidence at protein level"/>
<protein>
    <recommendedName>
        <fullName>Profilin-3</fullName>
    </recommendedName>
    <alternativeName>
        <fullName>Allergen Phl p 11</fullName>
    </alternativeName>
    <alternativeName>
        <fullName>Pollen allergen Phl p 12</fullName>
    </alternativeName>
    <allergenName>Phl p 12</allergenName>
</protein>
<reference key="1">
    <citation type="journal article" date="1997" name="Biochim. Biophys. Acta">
        <title>Sequence polymorphism and structural analysis of timothy grass pollen profilin allergen (Phl p 11).</title>
        <authorList>
            <person name="Asturias J.A."/>
            <person name="Arilla M.C."/>
            <person name="Bartolome B."/>
            <person name="Martinez J."/>
            <person name="Martinez A."/>
            <person name="Palacios R."/>
        </authorList>
    </citation>
    <scope>NUCLEOTIDE SEQUENCE [MRNA]</scope>
    <source>
        <tissue>Pollen</tissue>
    </source>
</reference>
<reference key="2">
    <citation type="journal article" date="2013" name="PLoS ONE">
        <title>Analysis of the effects of polymorphism on pollen profilin structural functionality and the generation of conformational, T- and B-cell epitopes.</title>
        <authorList>
            <person name="Jimenez-Lopez J.C."/>
            <person name="Rodriguez-Garcia M.I."/>
            <person name="Alche J.D."/>
        </authorList>
    </citation>
    <scope>3D-STRUCTURE MODELING</scope>
    <scope>DISULFIDE BOND</scope>
</reference>
<dbReference type="EMBL" id="Y09457">
    <property type="protein sequence ID" value="CAA70609.1"/>
    <property type="molecule type" value="mRNA"/>
</dbReference>
<dbReference type="SMR" id="O24282"/>
<dbReference type="Allergome" id="3417">
    <property type="allergen name" value="Phl p 12.0103"/>
</dbReference>
<dbReference type="Allergome" id="553">
    <property type="allergen name" value="Phl p 12"/>
</dbReference>
<dbReference type="GO" id="GO:0005938">
    <property type="term" value="C:cell cortex"/>
    <property type="evidence" value="ECO:0007669"/>
    <property type="project" value="TreeGrafter"/>
</dbReference>
<dbReference type="GO" id="GO:0005856">
    <property type="term" value="C:cytoskeleton"/>
    <property type="evidence" value="ECO:0007669"/>
    <property type="project" value="UniProtKB-SubCell"/>
</dbReference>
<dbReference type="GO" id="GO:0003785">
    <property type="term" value="F:actin monomer binding"/>
    <property type="evidence" value="ECO:0007669"/>
    <property type="project" value="TreeGrafter"/>
</dbReference>
<dbReference type="CDD" id="cd00148">
    <property type="entry name" value="PROF"/>
    <property type="match status" value="1"/>
</dbReference>
<dbReference type="FunFam" id="3.30.450.30:FF:000001">
    <property type="entry name" value="Profilin"/>
    <property type="match status" value="1"/>
</dbReference>
<dbReference type="Gene3D" id="3.30.450.30">
    <property type="entry name" value="Dynein light chain 2a, cytoplasmic"/>
    <property type="match status" value="1"/>
</dbReference>
<dbReference type="InterPro" id="IPR048278">
    <property type="entry name" value="PFN"/>
</dbReference>
<dbReference type="InterPro" id="IPR005455">
    <property type="entry name" value="PFN_euk"/>
</dbReference>
<dbReference type="InterPro" id="IPR036140">
    <property type="entry name" value="PFN_sf"/>
</dbReference>
<dbReference type="InterPro" id="IPR027310">
    <property type="entry name" value="Profilin_CS"/>
</dbReference>
<dbReference type="PANTHER" id="PTHR11604">
    <property type="entry name" value="PROFILIN"/>
    <property type="match status" value="1"/>
</dbReference>
<dbReference type="PANTHER" id="PTHR11604:SF31">
    <property type="entry name" value="PROFILIN"/>
    <property type="match status" value="1"/>
</dbReference>
<dbReference type="Pfam" id="PF00235">
    <property type="entry name" value="Profilin"/>
    <property type="match status" value="1"/>
</dbReference>
<dbReference type="PRINTS" id="PR00392">
    <property type="entry name" value="PROFILIN"/>
</dbReference>
<dbReference type="PRINTS" id="PR01640">
    <property type="entry name" value="PROFILINPLNT"/>
</dbReference>
<dbReference type="SMART" id="SM00392">
    <property type="entry name" value="PROF"/>
    <property type="match status" value="1"/>
</dbReference>
<dbReference type="SUPFAM" id="SSF55770">
    <property type="entry name" value="Profilin (actin-binding protein)"/>
    <property type="match status" value="1"/>
</dbReference>
<dbReference type="PROSITE" id="PS00414">
    <property type="entry name" value="PROFILIN"/>
    <property type="match status" value="1"/>
</dbReference>
<accession>O24282</accession>
<comment type="function">
    <text>Binds to actin and affects the structure of the cytoskeleton. At high concentrations, profilin prevents the polymerization of actin, whereas it enhances it at low concentrations. By binding to PIP2, it inhibits the formation of IP3 and DG.</text>
</comment>
<comment type="subunit">
    <text>Occurs in many kinds of cells as a complex with monomeric actin in a 1:1 ratio.</text>
</comment>
<comment type="subcellular location">
    <subcellularLocation>
        <location>Cytoplasm</location>
        <location>Cytoskeleton</location>
    </subcellularLocation>
</comment>
<comment type="PTM">
    <text evidence="1">Phosphorylated by MAP kinases.</text>
</comment>
<comment type="polymorphism">
    <text>Several isoforms of the allergen exist due to polymorphism.</text>
</comment>
<comment type="allergen">
    <text>Causes an allergic reaction in human. Binds to IgE.</text>
</comment>
<comment type="miscellaneous">
    <text evidence="3">The variability of the residues taking part of IgE-binding epitopes might be responsible of the difference in cross-reactivity among olive pollen cultivars, and between distantly related pollen species, leading to a variable range of allergy reactions among atopic patients.</text>
</comment>
<comment type="similarity">
    <text evidence="2">Belongs to the profilin family.</text>
</comment>
<feature type="initiator methionine" description="Removed" evidence="1">
    <location>
        <position position="1"/>
    </location>
</feature>
<feature type="chain" id="PRO_0000199665" description="Profilin-3">
    <location>
        <begin position="2"/>
        <end position="131"/>
    </location>
</feature>
<feature type="short sequence motif" description="Involved in PIP2 interaction">
    <location>
        <begin position="81"/>
        <end position="97"/>
    </location>
</feature>
<feature type="modified residue" description="Phosphothreonine" evidence="1">
    <location>
        <position position="111"/>
    </location>
</feature>
<feature type="disulfide bond" evidence="3">
    <location>
        <begin position="13"/>
        <end position="115"/>
    </location>
</feature>
<organism>
    <name type="scientific">Phleum pratense</name>
    <name type="common">Common timothy</name>
    <dbReference type="NCBI Taxonomy" id="15957"/>
    <lineage>
        <taxon>Eukaryota</taxon>
        <taxon>Viridiplantae</taxon>
        <taxon>Streptophyta</taxon>
        <taxon>Embryophyta</taxon>
        <taxon>Tracheophyta</taxon>
        <taxon>Spermatophyta</taxon>
        <taxon>Magnoliopsida</taxon>
        <taxon>Liliopsida</taxon>
        <taxon>Poales</taxon>
        <taxon>Poaceae</taxon>
        <taxon>BOP clade</taxon>
        <taxon>Pooideae</taxon>
        <taxon>Poodae</taxon>
        <taxon>Poeae</taxon>
        <taxon>Poeae Chloroplast Group 2 (Poeae type)</taxon>
        <taxon>Poodinae</taxon>
        <taxon>Phleinae</taxon>
        <taxon>Phleum</taxon>
    </lineage>
</organism>
<sequence length="131" mass="14164">MSWQTYVDEHLMCEIEGHHLASAAIFGHDGTVWAQSADFPQFKPEEITGIMKDLDEPGHLAPTGMFVAAAKYMVIQGEPGAVIRGKKGAGGITIKKTGQALVVGIYDEPMTPGQCNMVVERLGDYLVEQGM</sequence>
<evidence type="ECO:0000250" key="1"/>
<evidence type="ECO:0000305" key="2"/>
<evidence type="ECO:0000305" key="3">
    <source>
    </source>
</evidence>
<keyword id="KW-0009">Actin-binding</keyword>
<keyword id="KW-0020">Allergen</keyword>
<keyword id="KW-0963">Cytoplasm</keyword>
<keyword id="KW-0206">Cytoskeleton</keyword>
<keyword id="KW-1015">Disulfide bond</keyword>
<keyword id="KW-0597">Phosphoprotein</keyword>